<proteinExistence type="inferred from homology"/>
<evidence type="ECO:0000250" key="1"/>
<evidence type="ECO:0000255" key="2"/>
<evidence type="ECO:0000305" key="3"/>
<gene>
    <name type="primary">bglX</name>
    <name type="synonym">yohA</name>
    <name type="ordered locus">b2132</name>
    <name type="ordered locus">JW2120</name>
</gene>
<dbReference type="EC" id="3.2.1.21"/>
<dbReference type="EMBL" id="U15049">
    <property type="protein sequence ID" value="AAB38487.1"/>
    <property type="molecule type" value="Genomic_DNA"/>
</dbReference>
<dbReference type="EMBL" id="U00007">
    <property type="protein sequence ID" value="AAA60495.1"/>
    <property type="status" value="ALT_INIT"/>
    <property type="molecule type" value="Genomic_DNA"/>
</dbReference>
<dbReference type="EMBL" id="U00096">
    <property type="protein sequence ID" value="AAC75193.1"/>
    <property type="molecule type" value="Genomic_DNA"/>
</dbReference>
<dbReference type="EMBL" id="AP009048">
    <property type="protein sequence ID" value="BAE76609.1"/>
    <property type="molecule type" value="Genomic_DNA"/>
</dbReference>
<dbReference type="PIR" id="C64981">
    <property type="entry name" value="C64981"/>
</dbReference>
<dbReference type="RefSeq" id="NP_416636.1">
    <property type="nucleotide sequence ID" value="NC_000913.3"/>
</dbReference>
<dbReference type="RefSeq" id="WP_000871504.1">
    <property type="nucleotide sequence ID" value="NZ_SSZK01000011.1"/>
</dbReference>
<dbReference type="SMR" id="P33363"/>
<dbReference type="BioGRID" id="4260451">
    <property type="interactions" value="49"/>
</dbReference>
<dbReference type="DIP" id="DIP-9218N"/>
<dbReference type="FunCoup" id="P33363">
    <property type="interactions" value="271"/>
</dbReference>
<dbReference type="IntAct" id="P33363">
    <property type="interactions" value="16"/>
</dbReference>
<dbReference type="STRING" id="511145.b2132"/>
<dbReference type="CAZy" id="GH3">
    <property type="family name" value="Glycoside Hydrolase Family 3"/>
</dbReference>
<dbReference type="jPOST" id="P33363"/>
<dbReference type="PaxDb" id="511145-b2132"/>
<dbReference type="EnsemblBacteria" id="AAC75193">
    <property type="protein sequence ID" value="AAC75193"/>
    <property type="gene ID" value="b2132"/>
</dbReference>
<dbReference type="GeneID" id="946682"/>
<dbReference type="KEGG" id="ecj:JW2120"/>
<dbReference type="KEGG" id="eco:b2132"/>
<dbReference type="KEGG" id="ecoc:C3026_11955"/>
<dbReference type="PATRIC" id="fig|511145.12.peg.2212"/>
<dbReference type="EchoBASE" id="EB1951"/>
<dbReference type="eggNOG" id="COG1472">
    <property type="taxonomic scope" value="Bacteria"/>
</dbReference>
<dbReference type="HOGENOM" id="CLU_004542_5_1_6"/>
<dbReference type="InParanoid" id="P33363"/>
<dbReference type="OMA" id="MSAYHSY"/>
<dbReference type="OrthoDB" id="9781691at2"/>
<dbReference type="PhylomeDB" id="P33363"/>
<dbReference type="BioCyc" id="EcoCyc:EG12013-MONOMER"/>
<dbReference type="BioCyc" id="MetaCyc:EG12013-MONOMER"/>
<dbReference type="PRO" id="PR:P33363"/>
<dbReference type="Proteomes" id="UP000000625">
    <property type="component" value="Chromosome"/>
</dbReference>
<dbReference type="GO" id="GO:0030288">
    <property type="term" value="C:outer membrane-bounded periplasmic space"/>
    <property type="evidence" value="ECO:0000314"/>
    <property type="project" value="EcoCyc"/>
</dbReference>
<dbReference type="GO" id="GO:0042597">
    <property type="term" value="C:periplasmic space"/>
    <property type="evidence" value="ECO:0000314"/>
    <property type="project" value="EcoliWiki"/>
</dbReference>
<dbReference type="GO" id="GO:0008422">
    <property type="term" value="F:beta-glucosidase activity"/>
    <property type="evidence" value="ECO:0000314"/>
    <property type="project" value="EcoliWiki"/>
</dbReference>
<dbReference type="GO" id="GO:0015926">
    <property type="term" value="F:glucosidase activity"/>
    <property type="evidence" value="ECO:0000314"/>
    <property type="project" value="EcoliWiki"/>
</dbReference>
<dbReference type="GO" id="GO:0009251">
    <property type="term" value="P:glucan catabolic process"/>
    <property type="evidence" value="ECO:0000318"/>
    <property type="project" value="GO_Central"/>
</dbReference>
<dbReference type="FunFam" id="2.60.40.10:FF:000495">
    <property type="entry name" value="Periplasmic beta-glucosidase"/>
    <property type="match status" value="1"/>
</dbReference>
<dbReference type="FunFam" id="3.20.20.300:FF:000005">
    <property type="entry name" value="Periplasmic beta-glucosidase"/>
    <property type="match status" value="1"/>
</dbReference>
<dbReference type="FunFam" id="3.40.50.1700:FF:000004">
    <property type="entry name" value="Periplasmic beta-glucosidase"/>
    <property type="match status" value="1"/>
</dbReference>
<dbReference type="Gene3D" id="3.40.50.1700">
    <property type="entry name" value="Glycoside hydrolase family 3 C-terminal domain"/>
    <property type="match status" value="1"/>
</dbReference>
<dbReference type="Gene3D" id="3.20.20.300">
    <property type="entry name" value="Glycoside hydrolase, family 3, N-terminal domain"/>
    <property type="match status" value="1"/>
</dbReference>
<dbReference type="Gene3D" id="2.60.40.10">
    <property type="entry name" value="Immunoglobulins"/>
    <property type="match status" value="1"/>
</dbReference>
<dbReference type="InterPro" id="IPR051915">
    <property type="entry name" value="Cellulose_Degrad_GH3"/>
</dbReference>
<dbReference type="InterPro" id="IPR026891">
    <property type="entry name" value="Fn3-like"/>
</dbReference>
<dbReference type="InterPro" id="IPR019800">
    <property type="entry name" value="Glyco_hydro_3_AS"/>
</dbReference>
<dbReference type="InterPro" id="IPR002772">
    <property type="entry name" value="Glyco_hydro_3_C"/>
</dbReference>
<dbReference type="InterPro" id="IPR036881">
    <property type="entry name" value="Glyco_hydro_3_C_sf"/>
</dbReference>
<dbReference type="InterPro" id="IPR001764">
    <property type="entry name" value="Glyco_hydro_3_N"/>
</dbReference>
<dbReference type="InterPro" id="IPR036962">
    <property type="entry name" value="Glyco_hydro_3_N_sf"/>
</dbReference>
<dbReference type="InterPro" id="IPR017853">
    <property type="entry name" value="Glycoside_hydrolase_SF"/>
</dbReference>
<dbReference type="InterPro" id="IPR013783">
    <property type="entry name" value="Ig-like_fold"/>
</dbReference>
<dbReference type="NCBIfam" id="NF011678">
    <property type="entry name" value="PRK15098.1"/>
    <property type="match status" value="1"/>
</dbReference>
<dbReference type="PANTHER" id="PTHR30620:SF16">
    <property type="entry name" value="LYSOSOMAL BETA GLUCOSIDASE"/>
    <property type="match status" value="1"/>
</dbReference>
<dbReference type="PANTHER" id="PTHR30620">
    <property type="entry name" value="PERIPLASMIC BETA-GLUCOSIDASE-RELATED"/>
    <property type="match status" value="1"/>
</dbReference>
<dbReference type="Pfam" id="PF14310">
    <property type="entry name" value="Fn3-like"/>
    <property type="match status" value="1"/>
</dbReference>
<dbReference type="Pfam" id="PF00933">
    <property type="entry name" value="Glyco_hydro_3"/>
    <property type="match status" value="1"/>
</dbReference>
<dbReference type="Pfam" id="PF01915">
    <property type="entry name" value="Glyco_hydro_3_C"/>
    <property type="match status" value="1"/>
</dbReference>
<dbReference type="PRINTS" id="PR00133">
    <property type="entry name" value="GLHYDRLASE3"/>
</dbReference>
<dbReference type="SMART" id="SM01217">
    <property type="entry name" value="Fn3_like"/>
    <property type="match status" value="1"/>
</dbReference>
<dbReference type="SUPFAM" id="SSF51445">
    <property type="entry name" value="(Trans)glycosidases"/>
    <property type="match status" value="1"/>
</dbReference>
<dbReference type="SUPFAM" id="SSF52279">
    <property type="entry name" value="Beta-D-glucan exohydrolase, C-terminal domain"/>
    <property type="match status" value="1"/>
</dbReference>
<dbReference type="PROSITE" id="PS00775">
    <property type="entry name" value="GLYCOSYL_HYDROL_F3"/>
    <property type="match status" value="1"/>
</dbReference>
<reference key="1">
    <citation type="submission" date="1994-09" db="EMBL/GenBank/DDBJ databases">
        <authorList>
            <person name="Yang M."/>
            <person name="Luoh S."/>
            <person name="Goddard A."/>
            <person name="Reilly D."/>
            <person name="Henzel W."/>
            <person name="Bass S."/>
        </authorList>
    </citation>
    <scope>NUCLEOTIDE SEQUENCE [GENOMIC DNA]</scope>
    <source>
        <strain>K12 / W3110 / ATCC 27325 / DSM 5911</strain>
    </source>
</reference>
<reference key="2">
    <citation type="submission" date="1993-10" db="EMBL/GenBank/DDBJ databases">
        <title>Automated multiplex sequencing of the E.coli genome.</title>
        <authorList>
            <person name="Richterich P."/>
            <person name="Lakey N."/>
            <person name="Gryan G."/>
            <person name="Jaehn L."/>
            <person name="Mintz L."/>
            <person name="Robison K."/>
            <person name="Church G.M."/>
        </authorList>
    </citation>
    <scope>NUCLEOTIDE SEQUENCE [LARGE SCALE GENOMIC DNA]</scope>
    <source>
        <strain>K12 / BHB2600</strain>
    </source>
</reference>
<reference key="3">
    <citation type="journal article" date="1997" name="Science">
        <title>The complete genome sequence of Escherichia coli K-12.</title>
        <authorList>
            <person name="Blattner F.R."/>
            <person name="Plunkett G. III"/>
            <person name="Bloch C.A."/>
            <person name="Perna N.T."/>
            <person name="Burland V."/>
            <person name="Riley M."/>
            <person name="Collado-Vides J."/>
            <person name="Glasner J.D."/>
            <person name="Rode C.K."/>
            <person name="Mayhew G.F."/>
            <person name="Gregor J."/>
            <person name="Davis N.W."/>
            <person name="Kirkpatrick H.A."/>
            <person name="Goeden M.A."/>
            <person name="Rose D.J."/>
            <person name="Mau B."/>
            <person name="Shao Y."/>
        </authorList>
    </citation>
    <scope>NUCLEOTIDE SEQUENCE [LARGE SCALE GENOMIC DNA]</scope>
    <source>
        <strain>K12 / MG1655 / ATCC 47076</strain>
    </source>
</reference>
<reference key="4">
    <citation type="journal article" date="2006" name="Mol. Syst. Biol.">
        <title>Highly accurate genome sequences of Escherichia coli K-12 strains MG1655 and W3110.</title>
        <authorList>
            <person name="Hayashi K."/>
            <person name="Morooka N."/>
            <person name="Yamamoto Y."/>
            <person name="Fujita K."/>
            <person name="Isono K."/>
            <person name="Choi S."/>
            <person name="Ohtsubo E."/>
            <person name="Baba T."/>
            <person name="Wanner B.L."/>
            <person name="Mori H."/>
            <person name="Horiuchi T."/>
        </authorList>
    </citation>
    <scope>NUCLEOTIDE SEQUENCE [LARGE SCALE GENOMIC DNA]</scope>
    <source>
        <strain>K12 / W3110 / ATCC 27325 / DSM 5911</strain>
    </source>
</reference>
<protein>
    <recommendedName>
        <fullName>Periplasmic beta-glucosidase</fullName>
        <ecNumber>3.2.1.21</ecNumber>
    </recommendedName>
    <alternativeName>
        <fullName>Beta-D-glucoside glucohydrolase</fullName>
    </alternativeName>
    <alternativeName>
        <fullName>Cellobiase</fullName>
    </alternativeName>
    <alternativeName>
        <fullName>Gentiobiase</fullName>
    </alternativeName>
</protein>
<comment type="catalytic activity">
    <reaction>
        <text>Hydrolysis of terminal, non-reducing beta-D-glucosyl residues with release of beta-D-glucose.</text>
        <dbReference type="EC" id="3.2.1.21"/>
    </reaction>
</comment>
<comment type="subcellular location">
    <subcellularLocation>
        <location>Periplasm</location>
    </subcellularLocation>
</comment>
<comment type="similarity">
    <text evidence="3">Belongs to the glycosyl hydrolase 3 family.</text>
</comment>
<comment type="sequence caution" evidence="3">
    <conflict type="erroneous initiation">
        <sequence resource="EMBL-CDS" id="AAA60495"/>
    </conflict>
</comment>
<name>BGLX_ECOLI</name>
<organism>
    <name type="scientific">Escherichia coli (strain K12)</name>
    <dbReference type="NCBI Taxonomy" id="83333"/>
    <lineage>
        <taxon>Bacteria</taxon>
        <taxon>Pseudomonadati</taxon>
        <taxon>Pseudomonadota</taxon>
        <taxon>Gammaproteobacteria</taxon>
        <taxon>Enterobacterales</taxon>
        <taxon>Enterobacteriaceae</taxon>
        <taxon>Escherichia</taxon>
    </lineage>
</organism>
<accession>P33363</accession>
<accession>Q2MAU7</accession>
<keyword id="KW-0326">Glycosidase</keyword>
<keyword id="KW-0378">Hydrolase</keyword>
<keyword id="KW-0574">Periplasm</keyword>
<keyword id="KW-1185">Reference proteome</keyword>
<keyword id="KW-0732">Signal</keyword>
<feature type="signal peptide" evidence="2">
    <location>
        <begin position="1"/>
        <end position="20"/>
    </location>
</feature>
<feature type="chain" id="PRO_0000011781" description="Periplasmic beta-glucosidase">
    <location>
        <begin position="21"/>
        <end position="765"/>
    </location>
</feature>
<feature type="active site" evidence="1">
    <location>
        <position position="287"/>
    </location>
</feature>
<sequence>MKWLCSVGIAVSLALQPALADDLFGNHPLTPEARDAFVTELLKKMTVDEKIGQLRLISVGPDNPKEAIREMIKDGQVGAIFNTVTRQDIRAMQDQVMELSRLKIPLFFAYDVLHGQRTVFPISLGLASSFNLDAVKTVGRVSAYEAADDGLNMTWAPMVDVSRDPRWGRASEGFGEDTYLTSTMGKTMVEAMQGKSPADRYSVMTSVKHFAAYGAVEGGKEYNTVDMSPQRLFNDYMPPYKAGLDAGSGAVMVALNSLNGTPATSDSWLLKDVLRDQWGFKGITVSDHGAIKELIKHGTAADPEDAVRVALKSGINMSMSDEYYSKYLPGLIKSGKVTMAELDDAARHVLNVKYDMGLFNDPYSHLGPKESDPVDTNAESRLHRKEAREVARESLVLLKNRLETLPLKKSATIAVVGPLADSKRDVMGSWSAAGVADQSVTVLTGIKNAVGENGKVLYAKGANVTSDKGIIDFLNQYEEAVKVDPRSPQEMIDEAVQTAKQSDVVVAVVGEAQGMAHEASSRTDITIPQSQRDLIAALKATGKPLVLVLMNGRPLALVKEDQQADAILETWFAGTEGGNAIADVLFGDYNPSGKLPMSFPRSVGQIPVYYSHLNTGRPYNADKPNKYTSRYFDEANGALYPFGYGLSYTTFTVSDVKLSAPTMKRDGKVTASVQVTNTGKREGATVVQMYLQDVTASMSRPVKQLKGFEKITLKPGETQTVSFPIDIEALKFWNQQMKYDAEPGKFNVFIGTDSARVKKGEFELL</sequence>